<name>MNME_SHEON</name>
<organism>
    <name type="scientific">Shewanella oneidensis (strain ATCC 700550 / JCM 31522 / CIP 106686 / LMG 19005 / NCIMB 14063 / MR-1)</name>
    <dbReference type="NCBI Taxonomy" id="211586"/>
    <lineage>
        <taxon>Bacteria</taxon>
        <taxon>Pseudomonadati</taxon>
        <taxon>Pseudomonadota</taxon>
        <taxon>Gammaproteobacteria</taxon>
        <taxon>Alteromonadales</taxon>
        <taxon>Shewanellaceae</taxon>
        <taxon>Shewanella</taxon>
    </lineage>
</organism>
<proteinExistence type="inferred from homology"/>
<comment type="function">
    <text evidence="1">Exhibits a very high intrinsic GTPase hydrolysis rate. Involved in the addition of a carboxymethylaminomethyl (cmnm) group at the wobble position (U34) of certain tRNAs, forming tRNA-cmnm(5)s(2)U34.</text>
</comment>
<comment type="cofactor">
    <cofactor evidence="1">
        <name>K(+)</name>
        <dbReference type="ChEBI" id="CHEBI:29103"/>
    </cofactor>
    <text evidence="1">Binds 1 potassium ion per subunit.</text>
</comment>
<comment type="subunit">
    <text evidence="1">Homodimer. Heterotetramer of two MnmE and two MnmG subunits.</text>
</comment>
<comment type="subcellular location">
    <subcellularLocation>
        <location evidence="1">Cytoplasm</location>
    </subcellularLocation>
</comment>
<comment type="similarity">
    <text evidence="1">Belongs to the TRAFAC class TrmE-Era-EngA-EngB-Septin-like GTPase superfamily. TrmE GTPase family.</text>
</comment>
<keyword id="KW-0963">Cytoplasm</keyword>
<keyword id="KW-0342">GTP-binding</keyword>
<keyword id="KW-0378">Hydrolase</keyword>
<keyword id="KW-0460">Magnesium</keyword>
<keyword id="KW-0479">Metal-binding</keyword>
<keyword id="KW-0547">Nucleotide-binding</keyword>
<keyword id="KW-0630">Potassium</keyword>
<keyword id="KW-1185">Reference proteome</keyword>
<keyword id="KW-0819">tRNA processing</keyword>
<sequence>MTTDTIVAQATAPGRGGVGIIRISGDKATNVAMAVLGHLPKPRYADYCYFKSASGQVIDQGIALFFKGPNSFTGEDVLELQGHGGQIVLDMLIKRVLEVEGIRIAKPGEFSEQAFMNDKLDLTQAEAIADLIDATSEQAAKSALQSLQGEFSKEVHELVDQVTHLRLYVEAAIDFPDEEVDFLSDGKIANALYKIIDKLIAVQASAKQGSIIREGMKVVIAGRPNAGKSSLLNALAGKESAIVTEIAGTTRDVLREHIHLDGMPLHIIDTAGLRDTTDTVEQIGIERAWNEINSADRVLFMVDGTTTTAVDPHDIWPDFINRLPTNLGVTVIRNKADLTGENLEMTEEKGYSVYRISAKTGLGVDELKQHLKSLMGYQSNLEGGFIARRRHLEALEIAASHLQLGKEQLEVYLAGELLAEELRMAQLALSEITGRFTSDDLLGKIFSSFCIGK</sequence>
<accession>Q8CX52</accession>
<feature type="chain" id="PRO_0000188913" description="tRNA modification GTPase MnmE">
    <location>
        <begin position="1"/>
        <end position="453"/>
    </location>
</feature>
<feature type="domain" description="TrmE-type G">
    <location>
        <begin position="215"/>
        <end position="376"/>
    </location>
</feature>
<feature type="binding site" evidence="1">
    <location>
        <position position="22"/>
    </location>
    <ligand>
        <name>(6S)-5-formyl-5,6,7,8-tetrahydrofolate</name>
        <dbReference type="ChEBI" id="CHEBI:57457"/>
    </ligand>
</feature>
<feature type="binding site" evidence="1">
    <location>
        <position position="79"/>
    </location>
    <ligand>
        <name>(6S)-5-formyl-5,6,7,8-tetrahydrofolate</name>
        <dbReference type="ChEBI" id="CHEBI:57457"/>
    </ligand>
</feature>
<feature type="binding site" evidence="1">
    <location>
        <position position="119"/>
    </location>
    <ligand>
        <name>(6S)-5-formyl-5,6,7,8-tetrahydrofolate</name>
        <dbReference type="ChEBI" id="CHEBI:57457"/>
    </ligand>
</feature>
<feature type="binding site" evidence="1">
    <location>
        <begin position="225"/>
        <end position="230"/>
    </location>
    <ligand>
        <name>GTP</name>
        <dbReference type="ChEBI" id="CHEBI:37565"/>
    </ligand>
</feature>
<feature type="binding site" evidence="1">
    <location>
        <position position="225"/>
    </location>
    <ligand>
        <name>K(+)</name>
        <dbReference type="ChEBI" id="CHEBI:29103"/>
    </ligand>
</feature>
<feature type="binding site" evidence="1">
    <location>
        <position position="229"/>
    </location>
    <ligand>
        <name>Mg(2+)</name>
        <dbReference type="ChEBI" id="CHEBI:18420"/>
    </ligand>
</feature>
<feature type="binding site" evidence="1">
    <location>
        <begin position="244"/>
        <end position="250"/>
    </location>
    <ligand>
        <name>GTP</name>
        <dbReference type="ChEBI" id="CHEBI:37565"/>
    </ligand>
</feature>
<feature type="binding site" evidence="1">
    <location>
        <position position="244"/>
    </location>
    <ligand>
        <name>K(+)</name>
        <dbReference type="ChEBI" id="CHEBI:29103"/>
    </ligand>
</feature>
<feature type="binding site" evidence="1">
    <location>
        <position position="246"/>
    </location>
    <ligand>
        <name>K(+)</name>
        <dbReference type="ChEBI" id="CHEBI:29103"/>
    </ligand>
</feature>
<feature type="binding site" evidence="1">
    <location>
        <position position="249"/>
    </location>
    <ligand>
        <name>K(+)</name>
        <dbReference type="ChEBI" id="CHEBI:29103"/>
    </ligand>
</feature>
<feature type="binding site" evidence="1">
    <location>
        <position position="250"/>
    </location>
    <ligand>
        <name>Mg(2+)</name>
        <dbReference type="ChEBI" id="CHEBI:18420"/>
    </ligand>
</feature>
<feature type="binding site" evidence="1">
    <location>
        <begin position="269"/>
        <end position="272"/>
    </location>
    <ligand>
        <name>GTP</name>
        <dbReference type="ChEBI" id="CHEBI:37565"/>
    </ligand>
</feature>
<feature type="binding site" evidence="1">
    <location>
        <begin position="334"/>
        <end position="337"/>
    </location>
    <ligand>
        <name>GTP</name>
        <dbReference type="ChEBI" id="CHEBI:37565"/>
    </ligand>
</feature>
<feature type="binding site" evidence="1">
    <location>
        <position position="453"/>
    </location>
    <ligand>
        <name>(6S)-5-formyl-5,6,7,8-tetrahydrofolate</name>
        <dbReference type="ChEBI" id="CHEBI:57457"/>
    </ligand>
</feature>
<reference key="1">
    <citation type="journal article" date="2002" name="Nat. Biotechnol.">
        <title>Genome sequence of the dissimilatory metal ion-reducing bacterium Shewanella oneidensis.</title>
        <authorList>
            <person name="Heidelberg J.F."/>
            <person name="Paulsen I.T."/>
            <person name="Nelson K.E."/>
            <person name="Gaidos E.J."/>
            <person name="Nelson W.C."/>
            <person name="Read T.D."/>
            <person name="Eisen J.A."/>
            <person name="Seshadri R."/>
            <person name="Ward N.L."/>
            <person name="Methe B.A."/>
            <person name="Clayton R.A."/>
            <person name="Meyer T."/>
            <person name="Tsapin A."/>
            <person name="Scott J."/>
            <person name="Beanan M.J."/>
            <person name="Brinkac L.M."/>
            <person name="Daugherty S.C."/>
            <person name="DeBoy R.T."/>
            <person name="Dodson R.J."/>
            <person name="Durkin A.S."/>
            <person name="Haft D.H."/>
            <person name="Kolonay J.F."/>
            <person name="Madupu R."/>
            <person name="Peterson J.D."/>
            <person name="Umayam L.A."/>
            <person name="White O."/>
            <person name="Wolf A.M."/>
            <person name="Vamathevan J.J."/>
            <person name="Weidman J.F."/>
            <person name="Impraim M."/>
            <person name="Lee K."/>
            <person name="Berry K.J."/>
            <person name="Lee C."/>
            <person name="Mueller J."/>
            <person name="Khouri H.M."/>
            <person name="Gill J."/>
            <person name="Utterback T.R."/>
            <person name="McDonald L.A."/>
            <person name="Feldblyum T.V."/>
            <person name="Smith H.O."/>
            <person name="Venter J.C."/>
            <person name="Nealson K.H."/>
            <person name="Fraser C.M."/>
        </authorList>
    </citation>
    <scope>NUCLEOTIDE SEQUENCE [LARGE SCALE GENOMIC DNA]</scope>
    <source>
        <strain>ATCC 700550 / JCM 31522 / CIP 106686 / LMG 19005 / NCIMB 14063 / MR-1</strain>
    </source>
</reference>
<dbReference type="EC" id="3.6.-.-" evidence="1"/>
<dbReference type="EMBL" id="AE014299">
    <property type="protein sequence ID" value="AAN53090.2"/>
    <property type="molecule type" value="Genomic_DNA"/>
</dbReference>
<dbReference type="RefSeq" id="NP_715645.2">
    <property type="nucleotide sequence ID" value="NC_004347.2"/>
</dbReference>
<dbReference type="RefSeq" id="WP_011070419.1">
    <property type="nucleotide sequence ID" value="NC_004347.2"/>
</dbReference>
<dbReference type="SMR" id="Q8CX52"/>
<dbReference type="STRING" id="211586.SO_0003"/>
<dbReference type="PaxDb" id="211586-SO_0003"/>
<dbReference type="KEGG" id="son:SO_0003"/>
<dbReference type="PATRIC" id="fig|211586.12.peg.3"/>
<dbReference type="eggNOG" id="COG0486">
    <property type="taxonomic scope" value="Bacteria"/>
</dbReference>
<dbReference type="HOGENOM" id="CLU_019624_4_1_6"/>
<dbReference type="OrthoDB" id="9805918at2"/>
<dbReference type="PhylomeDB" id="Q8CX52"/>
<dbReference type="BioCyc" id="SONE211586:G1GMP-3-MONOMER"/>
<dbReference type="Proteomes" id="UP000008186">
    <property type="component" value="Chromosome"/>
</dbReference>
<dbReference type="GO" id="GO:0005737">
    <property type="term" value="C:cytoplasm"/>
    <property type="evidence" value="ECO:0000318"/>
    <property type="project" value="GO_Central"/>
</dbReference>
<dbReference type="GO" id="GO:0005829">
    <property type="term" value="C:cytosol"/>
    <property type="evidence" value="ECO:0000318"/>
    <property type="project" value="GO_Central"/>
</dbReference>
<dbReference type="GO" id="GO:0005525">
    <property type="term" value="F:GTP binding"/>
    <property type="evidence" value="ECO:0007669"/>
    <property type="project" value="UniProtKB-UniRule"/>
</dbReference>
<dbReference type="GO" id="GO:0003924">
    <property type="term" value="F:GTPase activity"/>
    <property type="evidence" value="ECO:0007669"/>
    <property type="project" value="UniProtKB-UniRule"/>
</dbReference>
<dbReference type="GO" id="GO:0046872">
    <property type="term" value="F:metal ion binding"/>
    <property type="evidence" value="ECO:0007669"/>
    <property type="project" value="UniProtKB-KW"/>
</dbReference>
<dbReference type="GO" id="GO:0030488">
    <property type="term" value="P:tRNA methylation"/>
    <property type="evidence" value="ECO:0000318"/>
    <property type="project" value="GO_Central"/>
</dbReference>
<dbReference type="GO" id="GO:0002098">
    <property type="term" value="P:tRNA wobble uridine modification"/>
    <property type="evidence" value="ECO:0000318"/>
    <property type="project" value="GO_Central"/>
</dbReference>
<dbReference type="CDD" id="cd04164">
    <property type="entry name" value="trmE"/>
    <property type="match status" value="1"/>
</dbReference>
<dbReference type="CDD" id="cd14858">
    <property type="entry name" value="TrmE_N"/>
    <property type="match status" value="1"/>
</dbReference>
<dbReference type="FunFam" id="3.30.1360.120:FF:000001">
    <property type="entry name" value="tRNA modification GTPase MnmE"/>
    <property type="match status" value="1"/>
</dbReference>
<dbReference type="FunFam" id="3.40.50.300:FF:000249">
    <property type="entry name" value="tRNA modification GTPase MnmE"/>
    <property type="match status" value="1"/>
</dbReference>
<dbReference type="Gene3D" id="3.40.50.300">
    <property type="entry name" value="P-loop containing nucleotide triphosphate hydrolases"/>
    <property type="match status" value="1"/>
</dbReference>
<dbReference type="Gene3D" id="3.30.1360.120">
    <property type="entry name" value="Probable tRNA modification gtpase trme, domain 1"/>
    <property type="match status" value="1"/>
</dbReference>
<dbReference type="Gene3D" id="1.20.120.430">
    <property type="entry name" value="tRNA modification GTPase MnmE domain 2"/>
    <property type="match status" value="1"/>
</dbReference>
<dbReference type="HAMAP" id="MF_00379">
    <property type="entry name" value="GTPase_MnmE"/>
    <property type="match status" value="1"/>
</dbReference>
<dbReference type="InterPro" id="IPR031168">
    <property type="entry name" value="G_TrmE"/>
</dbReference>
<dbReference type="InterPro" id="IPR006073">
    <property type="entry name" value="GTP-bd"/>
</dbReference>
<dbReference type="InterPro" id="IPR018948">
    <property type="entry name" value="GTP-bd_TrmE_N"/>
</dbReference>
<dbReference type="InterPro" id="IPR004520">
    <property type="entry name" value="GTPase_MnmE"/>
</dbReference>
<dbReference type="InterPro" id="IPR027368">
    <property type="entry name" value="MnmE_dom2"/>
</dbReference>
<dbReference type="InterPro" id="IPR025867">
    <property type="entry name" value="MnmE_helical"/>
</dbReference>
<dbReference type="InterPro" id="IPR027417">
    <property type="entry name" value="P-loop_NTPase"/>
</dbReference>
<dbReference type="InterPro" id="IPR005225">
    <property type="entry name" value="Small_GTP-bd"/>
</dbReference>
<dbReference type="InterPro" id="IPR027266">
    <property type="entry name" value="TrmE/GcvT_dom1"/>
</dbReference>
<dbReference type="NCBIfam" id="TIGR00450">
    <property type="entry name" value="mnmE_trmE_thdF"/>
    <property type="match status" value="1"/>
</dbReference>
<dbReference type="NCBIfam" id="NF003661">
    <property type="entry name" value="PRK05291.1-3"/>
    <property type="match status" value="1"/>
</dbReference>
<dbReference type="NCBIfam" id="TIGR00231">
    <property type="entry name" value="small_GTP"/>
    <property type="match status" value="1"/>
</dbReference>
<dbReference type="PANTHER" id="PTHR42714">
    <property type="entry name" value="TRNA MODIFICATION GTPASE GTPBP3"/>
    <property type="match status" value="1"/>
</dbReference>
<dbReference type="PANTHER" id="PTHR42714:SF2">
    <property type="entry name" value="TRNA MODIFICATION GTPASE GTPBP3, MITOCHONDRIAL"/>
    <property type="match status" value="1"/>
</dbReference>
<dbReference type="Pfam" id="PF01926">
    <property type="entry name" value="MMR_HSR1"/>
    <property type="match status" value="1"/>
</dbReference>
<dbReference type="Pfam" id="PF12631">
    <property type="entry name" value="MnmE_helical"/>
    <property type="match status" value="1"/>
</dbReference>
<dbReference type="Pfam" id="PF10396">
    <property type="entry name" value="TrmE_N"/>
    <property type="match status" value="1"/>
</dbReference>
<dbReference type="SUPFAM" id="SSF52540">
    <property type="entry name" value="P-loop containing nucleoside triphosphate hydrolases"/>
    <property type="match status" value="1"/>
</dbReference>
<dbReference type="SUPFAM" id="SSF116878">
    <property type="entry name" value="TrmE connector domain"/>
    <property type="match status" value="1"/>
</dbReference>
<dbReference type="PROSITE" id="PS51709">
    <property type="entry name" value="G_TRME"/>
    <property type="match status" value="1"/>
</dbReference>
<protein>
    <recommendedName>
        <fullName evidence="1">tRNA modification GTPase MnmE</fullName>
        <ecNumber evidence="1">3.6.-.-</ecNumber>
    </recommendedName>
</protein>
<gene>
    <name evidence="1" type="primary">mnmE</name>
    <name evidence="1" type="synonym">trmE</name>
    <name type="ordered locus">SO_0003</name>
</gene>
<evidence type="ECO:0000255" key="1">
    <source>
        <dbReference type="HAMAP-Rule" id="MF_00379"/>
    </source>
</evidence>